<sequence>MQSQLKACGDAPAPSCSLHHRRTISKKPSNGGNSGGGGGGVNSAYLATDVTTLDINAMFQSKKMKRHGAGVTAPSTPANYLGASAGAGQANPAHFNFPSYLNPASFYPNVDLLGGSSEHLPPLMSVPAYKPTSMLHGFSDAASAMDFAQLTEELNALQNLSASFPNSTPNAFQSLFATDSPSSFLTSSAVSSHLAKPSPLTANSVRGAGGRKNRMVEVKMINERPVVIVSDPQAASASARSQIVHLNRNVLGVLKGLEASKKRSISAEPLYSRKVFIGGLPIDVTEEEVWATFGWFGKVLVDWPRRPEHGGRGDFYEMDMGRRNSRSVSGYVFLVFQDEKAVQELVNACELYENKYYLQLSSPTMADKAVQVRAWRLSDIDYFCDENASVDHRRTVFIGGVPRPTRASDLAYCLQQHYGKVSYVGIDIDPELKYPKGAARVTFATAQSFVRAISGRFVQVTHADTNKRVEIKPYVMEDQHCDECQGKLCKHNYAPYFCGDSSCLQYYCEACWDRMHYAMCDNRADHRPMVRTGDQTRILPRPPHHSTSHYHHRSTPSHHHNHTHQNVTSSLLEHAPHLQNTSIISRIVNRNNQNNNSANSTPPQMKQFSAIPTAIGY</sequence>
<keyword id="KW-0217">Developmental protein</keyword>
<keyword id="KW-0221">Differentiation</keyword>
<keyword id="KW-1185">Reference proteome</keyword>
<keyword id="KW-0677">Repeat</keyword>
<keyword id="KW-0694">RNA-binding</keyword>
<keyword id="KW-0744">Spermatogenesis</keyword>
<gene>
    <name type="primary">cpb-1</name>
</gene>
<name>CPB1_CAEJA</name>
<proteinExistence type="evidence at transcript level"/>
<protein>
    <recommendedName>
        <fullName>Cytoplasmic polyadenylation element-binding protein 1</fullName>
    </recommendedName>
</protein>
<organism>
    <name type="scientific">Caenorhabditis japonica</name>
    <dbReference type="NCBI Taxonomy" id="281687"/>
    <lineage>
        <taxon>Eukaryota</taxon>
        <taxon>Metazoa</taxon>
        <taxon>Ecdysozoa</taxon>
        <taxon>Nematoda</taxon>
        <taxon>Chromadorea</taxon>
        <taxon>Rhabditida</taxon>
        <taxon>Rhabditina</taxon>
        <taxon>Rhabditomorpha</taxon>
        <taxon>Rhabditoidea</taxon>
        <taxon>Rhabditidae</taxon>
        <taxon>Peloderinae</taxon>
        <taxon>Caenorhabditis</taxon>
    </lineage>
</organism>
<reference key="1">
    <citation type="journal article" date="2004" name="Genome Res.">
        <title>A phylogeny of Caenorhabditis reveals frequent loss of introns during nematode evolution.</title>
        <authorList>
            <person name="Cho S."/>
            <person name="Jin S.W."/>
            <person name="Cohen A."/>
            <person name="Ellis R.E."/>
        </authorList>
    </citation>
    <scope>NUCLEOTIDE SEQUENCE [GENOMIC DNA / MRNA]</scope>
</reference>
<accession>Q6E3C7</accession>
<evidence type="ECO:0000250" key="1"/>
<evidence type="ECO:0000255" key="2">
    <source>
        <dbReference type="PROSITE-ProRule" id="PRU00176"/>
    </source>
</evidence>
<evidence type="ECO:0000256" key="3">
    <source>
        <dbReference type="SAM" id="MobiDB-lite"/>
    </source>
</evidence>
<dbReference type="EMBL" id="AY589645">
    <property type="protein sequence ID" value="AAT72429.1"/>
    <property type="molecule type" value="Genomic_DNA"/>
</dbReference>
<dbReference type="EMBL" id="AY589595">
    <property type="protein sequence ID" value="AAT72412.1"/>
    <property type="molecule type" value="mRNA"/>
</dbReference>
<dbReference type="SMR" id="Q6E3C7"/>
<dbReference type="FunCoup" id="Q6E3C7">
    <property type="interactions" value="4"/>
</dbReference>
<dbReference type="STRING" id="281687.Q6E3C7"/>
<dbReference type="eggNOG" id="KOG0129">
    <property type="taxonomic scope" value="Eukaryota"/>
</dbReference>
<dbReference type="HOGENOM" id="CLU_035644_0_0_1"/>
<dbReference type="InParanoid" id="Q6E3C7"/>
<dbReference type="OMA" id="WPRRPEH"/>
<dbReference type="Proteomes" id="UP000005237">
    <property type="component" value="Unassembled WGS sequence"/>
</dbReference>
<dbReference type="GO" id="GO:0005737">
    <property type="term" value="C:cytoplasm"/>
    <property type="evidence" value="ECO:0007669"/>
    <property type="project" value="TreeGrafter"/>
</dbReference>
<dbReference type="GO" id="GO:0043005">
    <property type="term" value="C:neuron projection"/>
    <property type="evidence" value="ECO:0007669"/>
    <property type="project" value="TreeGrafter"/>
</dbReference>
<dbReference type="GO" id="GO:0005634">
    <property type="term" value="C:nucleus"/>
    <property type="evidence" value="ECO:0007669"/>
    <property type="project" value="TreeGrafter"/>
</dbReference>
<dbReference type="GO" id="GO:0045202">
    <property type="term" value="C:synapse"/>
    <property type="evidence" value="ECO:0007669"/>
    <property type="project" value="TreeGrafter"/>
</dbReference>
<dbReference type="GO" id="GO:0003730">
    <property type="term" value="F:mRNA 3'-UTR binding"/>
    <property type="evidence" value="ECO:0007669"/>
    <property type="project" value="InterPro"/>
</dbReference>
<dbReference type="GO" id="GO:0000900">
    <property type="term" value="F:mRNA regulatory element binding translation repressor activity"/>
    <property type="evidence" value="ECO:0007669"/>
    <property type="project" value="TreeGrafter"/>
</dbReference>
<dbReference type="GO" id="GO:0043022">
    <property type="term" value="F:ribosome binding"/>
    <property type="evidence" value="ECO:0007669"/>
    <property type="project" value="TreeGrafter"/>
</dbReference>
<dbReference type="GO" id="GO:0008135">
    <property type="term" value="F:translation factor activity, RNA binding"/>
    <property type="evidence" value="ECO:0007669"/>
    <property type="project" value="TreeGrafter"/>
</dbReference>
<dbReference type="GO" id="GO:0030154">
    <property type="term" value="P:cell differentiation"/>
    <property type="evidence" value="ECO:0007669"/>
    <property type="project" value="UniProtKB-KW"/>
</dbReference>
<dbReference type="GO" id="GO:2000766">
    <property type="term" value="P:negative regulation of cytoplasmic translation"/>
    <property type="evidence" value="ECO:0007669"/>
    <property type="project" value="TreeGrafter"/>
</dbReference>
<dbReference type="GO" id="GO:0007283">
    <property type="term" value="P:spermatogenesis"/>
    <property type="evidence" value="ECO:0007669"/>
    <property type="project" value="UniProtKB-KW"/>
</dbReference>
<dbReference type="CDD" id="cd19757">
    <property type="entry name" value="Bbox1"/>
    <property type="match status" value="1"/>
</dbReference>
<dbReference type="CDD" id="cd12724">
    <property type="entry name" value="RRM1_CPEB2_like"/>
    <property type="match status" value="1"/>
</dbReference>
<dbReference type="CDD" id="cd12726">
    <property type="entry name" value="RRM2_CPEB2_like"/>
    <property type="match status" value="1"/>
</dbReference>
<dbReference type="FunFam" id="4.10.640.40:FF:000001">
    <property type="entry name" value="Cytoplasmic polyadenylation element-binding 2 isoform X2"/>
    <property type="match status" value="1"/>
</dbReference>
<dbReference type="Gene3D" id="3.30.70.330">
    <property type="match status" value="2"/>
</dbReference>
<dbReference type="Gene3D" id="4.10.640.40">
    <property type="entry name" value="Cytoplasmic polyadenylation element-binding protein, ZZ domain"/>
    <property type="match status" value="1"/>
</dbReference>
<dbReference type="InterPro" id="IPR032296">
    <property type="entry name" value="CEBP_ZZ"/>
</dbReference>
<dbReference type="InterPro" id="IPR038446">
    <property type="entry name" value="CEBP_ZZ_sf"/>
</dbReference>
<dbReference type="InterPro" id="IPR034819">
    <property type="entry name" value="CPEB"/>
</dbReference>
<dbReference type="InterPro" id="IPR012677">
    <property type="entry name" value="Nucleotide-bd_a/b_plait_sf"/>
</dbReference>
<dbReference type="InterPro" id="IPR035979">
    <property type="entry name" value="RBD_domain_sf"/>
</dbReference>
<dbReference type="InterPro" id="IPR000504">
    <property type="entry name" value="RRM_dom"/>
</dbReference>
<dbReference type="PANTHER" id="PTHR12566">
    <property type="entry name" value="CYTOPLASMIC POLYADENYLATION ELEMENT BINDING PROTEIN CPEB"/>
    <property type="match status" value="1"/>
</dbReference>
<dbReference type="PANTHER" id="PTHR12566:SF17">
    <property type="entry name" value="CYTOPLASMIC POLYADENYLATION ELEMENT-BINDING PROTEIN 1"/>
    <property type="match status" value="1"/>
</dbReference>
<dbReference type="Pfam" id="PF16366">
    <property type="entry name" value="CEBP_ZZ"/>
    <property type="match status" value="1"/>
</dbReference>
<dbReference type="Pfam" id="PF16367">
    <property type="entry name" value="RRM_7"/>
    <property type="match status" value="1"/>
</dbReference>
<dbReference type="SMART" id="SM00360">
    <property type="entry name" value="RRM"/>
    <property type="match status" value="2"/>
</dbReference>
<dbReference type="SUPFAM" id="SSF54928">
    <property type="entry name" value="RNA-binding domain, RBD"/>
    <property type="match status" value="1"/>
</dbReference>
<dbReference type="PROSITE" id="PS50102">
    <property type="entry name" value="RRM"/>
    <property type="match status" value="2"/>
</dbReference>
<comment type="function">
    <text evidence="1">Cytoplasmic polyadenylation element binding protein that binds to and regulates the translation of specific mRNAs. Essential for progression through meiosis. Involved in spermatogenesis (By similarity).</text>
</comment>
<comment type="subunit">
    <text evidence="1">Interacts with fbf-1.</text>
</comment>
<feature type="chain" id="PRO_0000081510" description="Cytoplasmic polyadenylation element-binding protein 1">
    <location>
        <begin position="1"/>
        <end position="617"/>
    </location>
</feature>
<feature type="domain" description="RRM 1" evidence="2">
    <location>
        <begin position="273"/>
        <end position="377"/>
    </location>
</feature>
<feature type="domain" description="RRM 2" evidence="2">
    <location>
        <begin position="394"/>
        <end position="465"/>
    </location>
</feature>
<feature type="region of interest" description="Disordered" evidence="3">
    <location>
        <begin position="1"/>
        <end position="38"/>
    </location>
</feature>
<feature type="region of interest" description="Disordered" evidence="3">
    <location>
        <begin position="534"/>
        <end position="568"/>
    </location>
</feature>
<feature type="region of interest" description="Disordered" evidence="3">
    <location>
        <begin position="592"/>
        <end position="617"/>
    </location>
</feature>
<feature type="compositionally biased region" description="Basic residues" evidence="3">
    <location>
        <begin position="542"/>
        <end position="563"/>
    </location>
</feature>